<feature type="signal peptide" evidence="1">
    <location>
        <begin position="1"/>
        <end position="16"/>
    </location>
</feature>
<feature type="chain" id="PRO_0000032796" description="Membrane-bound lytic murein transglycosylase C">
    <location>
        <begin position="17"/>
        <end position="360"/>
    </location>
</feature>
<feature type="lipid moiety-binding region" description="N-palmitoyl cysteine" evidence="1">
    <location>
        <position position="17"/>
    </location>
</feature>
<feature type="lipid moiety-binding region" description="S-diacylglycerol cysteine" evidence="1">
    <location>
        <position position="17"/>
    </location>
</feature>
<organism>
    <name type="scientific">Salmonella typhi</name>
    <dbReference type="NCBI Taxonomy" id="90370"/>
    <lineage>
        <taxon>Bacteria</taxon>
        <taxon>Pseudomonadati</taxon>
        <taxon>Pseudomonadota</taxon>
        <taxon>Gammaproteobacteria</taxon>
        <taxon>Enterobacterales</taxon>
        <taxon>Enterobacteriaceae</taxon>
        <taxon>Salmonella</taxon>
    </lineage>
</organism>
<gene>
    <name evidence="1" type="primary">mltC</name>
    <name type="ordered locus">STY3267</name>
    <name type="ordered locus">t3025</name>
</gene>
<proteinExistence type="inferred from homology"/>
<keyword id="KW-0998">Cell outer membrane</keyword>
<keyword id="KW-0961">Cell wall biogenesis/degradation</keyword>
<keyword id="KW-0449">Lipoprotein</keyword>
<keyword id="KW-0456">Lyase</keyword>
<keyword id="KW-0472">Membrane</keyword>
<keyword id="KW-0564">Palmitate</keyword>
<keyword id="KW-0732">Signal</keyword>
<protein>
    <recommendedName>
        <fullName evidence="1">Membrane-bound lytic murein transglycosylase C</fullName>
        <ecNumber evidence="1">4.2.2.n1</ecNumber>
    </recommendedName>
    <alternativeName>
        <fullName evidence="1">Murein lyase C</fullName>
    </alternativeName>
</protein>
<dbReference type="EC" id="4.2.2.n1" evidence="1"/>
<dbReference type="EMBL" id="AL513382">
    <property type="protein sequence ID" value="CAD02937.1"/>
    <property type="status" value="ALT_INIT"/>
    <property type="molecule type" value="Genomic_DNA"/>
</dbReference>
<dbReference type="EMBL" id="AE014613">
    <property type="protein sequence ID" value="AAO70577.1"/>
    <property type="status" value="ALT_INIT"/>
    <property type="molecule type" value="Genomic_DNA"/>
</dbReference>
<dbReference type="RefSeq" id="NP_457505.1">
    <property type="nucleotide sequence ID" value="NC_003198.1"/>
</dbReference>
<dbReference type="SMR" id="Q8Z3T9"/>
<dbReference type="STRING" id="220341.gene:17587139"/>
<dbReference type="KEGG" id="stt:t3025"/>
<dbReference type="KEGG" id="sty:STY3267"/>
<dbReference type="PATRIC" id="fig|220341.7.peg.3332"/>
<dbReference type="eggNOG" id="COG0741">
    <property type="taxonomic scope" value="Bacteria"/>
</dbReference>
<dbReference type="HOGENOM" id="CLU_044583_0_0_6"/>
<dbReference type="OMA" id="AIMQIES"/>
<dbReference type="Proteomes" id="UP000000541">
    <property type="component" value="Chromosome"/>
</dbReference>
<dbReference type="Proteomes" id="UP000002670">
    <property type="component" value="Chromosome"/>
</dbReference>
<dbReference type="GO" id="GO:0009279">
    <property type="term" value="C:cell outer membrane"/>
    <property type="evidence" value="ECO:0007669"/>
    <property type="project" value="UniProtKB-SubCell"/>
</dbReference>
<dbReference type="GO" id="GO:0016798">
    <property type="term" value="F:hydrolase activity, acting on glycosyl bonds"/>
    <property type="evidence" value="ECO:0007669"/>
    <property type="project" value="InterPro"/>
</dbReference>
<dbReference type="GO" id="GO:0008933">
    <property type="term" value="F:peptidoglycan lytic transglycosylase activity"/>
    <property type="evidence" value="ECO:0007669"/>
    <property type="project" value="UniProtKB-UniRule"/>
</dbReference>
<dbReference type="GO" id="GO:0016998">
    <property type="term" value="P:cell wall macromolecule catabolic process"/>
    <property type="evidence" value="ECO:0007669"/>
    <property type="project" value="UniProtKB-UniRule"/>
</dbReference>
<dbReference type="GO" id="GO:0071555">
    <property type="term" value="P:cell wall organization"/>
    <property type="evidence" value="ECO:0007669"/>
    <property type="project" value="UniProtKB-KW"/>
</dbReference>
<dbReference type="GO" id="GO:0000270">
    <property type="term" value="P:peptidoglycan metabolic process"/>
    <property type="evidence" value="ECO:0007669"/>
    <property type="project" value="InterPro"/>
</dbReference>
<dbReference type="CDD" id="cd16893">
    <property type="entry name" value="LT_MltC_MltE"/>
    <property type="match status" value="1"/>
</dbReference>
<dbReference type="FunFam" id="1.10.530.10:FF:000002">
    <property type="entry name" value="Membrane-bound lytic murein transglycosylase C"/>
    <property type="match status" value="1"/>
</dbReference>
<dbReference type="Gene3D" id="1.10.530.10">
    <property type="match status" value="1"/>
</dbReference>
<dbReference type="HAMAP" id="MF_01616">
    <property type="entry name" value="MltC"/>
    <property type="match status" value="1"/>
</dbReference>
<dbReference type="InterPro" id="IPR023346">
    <property type="entry name" value="Lysozyme-like_dom_sf"/>
</dbReference>
<dbReference type="InterPro" id="IPR023664">
    <property type="entry name" value="Murein_transglycosylaseC"/>
</dbReference>
<dbReference type="InterPro" id="IPR024570">
    <property type="entry name" value="Murein_transglycosylaseC_N"/>
</dbReference>
<dbReference type="InterPro" id="IPR000189">
    <property type="entry name" value="Transglyc_AS"/>
</dbReference>
<dbReference type="InterPro" id="IPR008258">
    <property type="entry name" value="Transglycosylase_SLT_dom_1"/>
</dbReference>
<dbReference type="NCBIfam" id="NF008670">
    <property type="entry name" value="PRK11671.1"/>
    <property type="match status" value="1"/>
</dbReference>
<dbReference type="PANTHER" id="PTHR37423:SF2">
    <property type="entry name" value="MEMBRANE-BOUND LYTIC MUREIN TRANSGLYCOSYLASE C"/>
    <property type="match status" value="1"/>
</dbReference>
<dbReference type="PANTHER" id="PTHR37423">
    <property type="entry name" value="SOLUBLE LYTIC MUREIN TRANSGLYCOSYLASE-RELATED"/>
    <property type="match status" value="1"/>
</dbReference>
<dbReference type="Pfam" id="PF11873">
    <property type="entry name" value="Mltc_N"/>
    <property type="match status" value="1"/>
</dbReference>
<dbReference type="Pfam" id="PF01464">
    <property type="entry name" value="SLT"/>
    <property type="match status" value="1"/>
</dbReference>
<dbReference type="SUPFAM" id="SSF53955">
    <property type="entry name" value="Lysozyme-like"/>
    <property type="match status" value="1"/>
</dbReference>
<dbReference type="PROSITE" id="PS51257">
    <property type="entry name" value="PROKAR_LIPOPROTEIN"/>
    <property type="match status" value="1"/>
</dbReference>
<dbReference type="PROSITE" id="PS00922">
    <property type="entry name" value="TRANSGLYCOSYLASE"/>
    <property type="match status" value="1"/>
</dbReference>
<accession>Q8Z3T9</accession>
<accession>Q7C7A4</accession>
<evidence type="ECO:0000255" key="1">
    <source>
        <dbReference type="HAMAP-Rule" id="MF_01616"/>
    </source>
</evidence>
<evidence type="ECO:0000305" key="2"/>
<name>MLTC_SALTI</name>
<reference key="1">
    <citation type="journal article" date="2001" name="Nature">
        <title>Complete genome sequence of a multiple drug resistant Salmonella enterica serovar Typhi CT18.</title>
        <authorList>
            <person name="Parkhill J."/>
            <person name="Dougan G."/>
            <person name="James K.D."/>
            <person name="Thomson N.R."/>
            <person name="Pickard D."/>
            <person name="Wain J."/>
            <person name="Churcher C.M."/>
            <person name="Mungall K.L."/>
            <person name="Bentley S.D."/>
            <person name="Holden M.T.G."/>
            <person name="Sebaihia M."/>
            <person name="Baker S."/>
            <person name="Basham D."/>
            <person name="Brooks K."/>
            <person name="Chillingworth T."/>
            <person name="Connerton P."/>
            <person name="Cronin A."/>
            <person name="Davis P."/>
            <person name="Davies R.M."/>
            <person name="Dowd L."/>
            <person name="White N."/>
            <person name="Farrar J."/>
            <person name="Feltwell T."/>
            <person name="Hamlin N."/>
            <person name="Haque A."/>
            <person name="Hien T.T."/>
            <person name="Holroyd S."/>
            <person name="Jagels K."/>
            <person name="Krogh A."/>
            <person name="Larsen T.S."/>
            <person name="Leather S."/>
            <person name="Moule S."/>
            <person name="O'Gaora P."/>
            <person name="Parry C."/>
            <person name="Quail M.A."/>
            <person name="Rutherford K.M."/>
            <person name="Simmonds M."/>
            <person name="Skelton J."/>
            <person name="Stevens K."/>
            <person name="Whitehead S."/>
            <person name="Barrell B.G."/>
        </authorList>
    </citation>
    <scope>NUCLEOTIDE SEQUENCE [LARGE SCALE GENOMIC DNA]</scope>
    <source>
        <strain>CT18</strain>
    </source>
</reference>
<reference key="2">
    <citation type="journal article" date="2003" name="J. Bacteriol.">
        <title>Comparative genomics of Salmonella enterica serovar Typhi strains Ty2 and CT18.</title>
        <authorList>
            <person name="Deng W."/>
            <person name="Liou S.-R."/>
            <person name="Plunkett G. III"/>
            <person name="Mayhew G.F."/>
            <person name="Rose D.J."/>
            <person name="Burland V."/>
            <person name="Kodoyianni V."/>
            <person name="Schwartz D.C."/>
            <person name="Blattner F.R."/>
        </authorList>
    </citation>
    <scope>NUCLEOTIDE SEQUENCE [LARGE SCALE GENOMIC DNA]</scope>
    <source>
        <strain>ATCC 700931 / Ty2</strain>
    </source>
</reference>
<comment type="function">
    <text evidence="1">Murein-degrading enzyme. May play a role in recycling of muropeptides during cell elongation and/or cell division.</text>
</comment>
<comment type="catalytic activity">
    <reaction evidence="1">
        <text>Exolytic cleavage of the (1-&gt;4)-beta-glycosidic linkage between N-acetylmuramic acid (MurNAc) and N-acetylglucosamine (GlcNAc) residues in peptidoglycan, from either the reducing or the non-reducing ends of the peptidoglycan chains, with concomitant formation of a 1,6-anhydrobond in the MurNAc residue.</text>
        <dbReference type="EC" id="4.2.2.n1"/>
    </reaction>
</comment>
<comment type="subcellular location">
    <subcellularLocation>
        <location evidence="1">Cell outer membrane</location>
        <topology evidence="1">Lipid-anchor</topology>
    </subcellularLocation>
</comment>
<comment type="similarity">
    <text evidence="1">Belongs to the transglycosylase Slt family.</text>
</comment>
<comment type="sequence caution" evidence="2">
    <conflict type="erroneous initiation">
        <sequence resource="EMBL-CDS" id="AAO70577"/>
    </conflict>
</comment>
<comment type="sequence caution" evidence="2">
    <conflict type="erroneous initiation">
        <sequence resource="EMBL-CDS" id="CAD02937"/>
    </conflict>
</comment>
<sequence>MKKLLALAVIAPLLISCSSSTKKGETYNEAWVKDTNGFDILMGQFANNIENLWGYKEVLIAGPKDYVKYTDQFQTRSHINFDDGTITVETIAGTEPTAHLRRAIIKTLLMGDDPTSVDLYSDVDDIKISKEPFLYGQVLDNTGQPIRWEGRATTFADYLLKTRLKSRSNGLRIIYSVTINLVPNHLDKRAHKYIGMVRQASRKYGVDESLILAIMQTESSFNPYAVSHADALGLMQVVQHSAGKDVFRSQGKSGTPSRNFLFDPASNIDTGTAYLAMLNNVYLSGIENPTSRRYAVITAYNGGAGSVLRIFSNDKIQAANMINRMSPGDVYQILTTRHPSAESRRYLYKVNSAQRSYRRR</sequence>